<protein>
    <recommendedName>
        <fullName evidence="1">Phospho-N-acetylmuramoyl-pentapeptide-transferase</fullName>
        <ecNumber evidence="1">2.7.8.13</ecNumber>
    </recommendedName>
    <alternativeName>
        <fullName evidence="1">UDP-MurNAc-pentapeptide phosphotransferase</fullName>
    </alternativeName>
</protein>
<accession>Q82VS6</accession>
<name>MRAY_NITEU</name>
<proteinExistence type="inferred from homology"/>
<dbReference type="EC" id="2.7.8.13" evidence="1"/>
<dbReference type="EMBL" id="AL954747">
    <property type="protein sequence ID" value="CAD84899.1"/>
    <property type="molecule type" value="Genomic_DNA"/>
</dbReference>
<dbReference type="RefSeq" id="WP_011111597.1">
    <property type="nucleotide sequence ID" value="NC_004757.1"/>
</dbReference>
<dbReference type="SMR" id="Q82VS6"/>
<dbReference type="STRING" id="228410.NE0988"/>
<dbReference type="GeneID" id="87104179"/>
<dbReference type="KEGG" id="neu:NE0988"/>
<dbReference type="eggNOG" id="COG0472">
    <property type="taxonomic scope" value="Bacteria"/>
</dbReference>
<dbReference type="HOGENOM" id="CLU_023982_0_0_4"/>
<dbReference type="OrthoDB" id="9805475at2"/>
<dbReference type="PhylomeDB" id="Q82VS6"/>
<dbReference type="UniPathway" id="UPA00219"/>
<dbReference type="Proteomes" id="UP000001416">
    <property type="component" value="Chromosome"/>
</dbReference>
<dbReference type="GO" id="GO:0005886">
    <property type="term" value="C:plasma membrane"/>
    <property type="evidence" value="ECO:0007669"/>
    <property type="project" value="UniProtKB-SubCell"/>
</dbReference>
<dbReference type="GO" id="GO:0046872">
    <property type="term" value="F:metal ion binding"/>
    <property type="evidence" value="ECO:0007669"/>
    <property type="project" value="UniProtKB-KW"/>
</dbReference>
<dbReference type="GO" id="GO:0008963">
    <property type="term" value="F:phospho-N-acetylmuramoyl-pentapeptide-transferase activity"/>
    <property type="evidence" value="ECO:0007669"/>
    <property type="project" value="UniProtKB-UniRule"/>
</dbReference>
<dbReference type="GO" id="GO:0051992">
    <property type="term" value="F:UDP-N-acetylmuramoyl-L-alanyl-D-glutamyl-meso-2,6-diaminopimelyl-D-alanyl-D-alanine:undecaprenyl-phosphate transferase activity"/>
    <property type="evidence" value="ECO:0007669"/>
    <property type="project" value="RHEA"/>
</dbReference>
<dbReference type="GO" id="GO:0051301">
    <property type="term" value="P:cell division"/>
    <property type="evidence" value="ECO:0007669"/>
    <property type="project" value="UniProtKB-KW"/>
</dbReference>
<dbReference type="GO" id="GO:0071555">
    <property type="term" value="P:cell wall organization"/>
    <property type="evidence" value="ECO:0007669"/>
    <property type="project" value="UniProtKB-KW"/>
</dbReference>
<dbReference type="GO" id="GO:0009252">
    <property type="term" value="P:peptidoglycan biosynthetic process"/>
    <property type="evidence" value="ECO:0007669"/>
    <property type="project" value="UniProtKB-UniRule"/>
</dbReference>
<dbReference type="GO" id="GO:0008360">
    <property type="term" value="P:regulation of cell shape"/>
    <property type="evidence" value="ECO:0007669"/>
    <property type="project" value="UniProtKB-KW"/>
</dbReference>
<dbReference type="CDD" id="cd06852">
    <property type="entry name" value="GT_MraY"/>
    <property type="match status" value="1"/>
</dbReference>
<dbReference type="HAMAP" id="MF_00038">
    <property type="entry name" value="MraY"/>
    <property type="match status" value="1"/>
</dbReference>
<dbReference type="InterPro" id="IPR000715">
    <property type="entry name" value="Glycosyl_transferase_4"/>
</dbReference>
<dbReference type="InterPro" id="IPR003524">
    <property type="entry name" value="PNAcMuramoyl-5peptid_Trfase"/>
</dbReference>
<dbReference type="InterPro" id="IPR018480">
    <property type="entry name" value="PNAcMuramoyl-5peptid_Trfase_CS"/>
</dbReference>
<dbReference type="NCBIfam" id="TIGR00445">
    <property type="entry name" value="mraY"/>
    <property type="match status" value="1"/>
</dbReference>
<dbReference type="PANTHER" id="PTHR22926">
    <property type="entry name" value="PHOSPHO-N-ACETYLMURAMOYL-PENTAPEPTIDE-TRANSFERASE"/>
    <property type="match status" value="1"/>
</dbReference>
<dbReference type="PANTHER" id="PTHR22926:SF5">
    <property type="entry name" value="PHOSPHO-N-ACETYLMURAMOYL-PENTAPEPTIDE-TRANSFERASE HOMOLOG"/>
    <property type="match status" value="1"/>
</dbReference>
<dbReference type="Pfam" id="PF00953">
    <property type="entry name" value="Glycos_transf_4"/>
    <property type="match status" value="1"/>
</dbReference>
<dbReference type="Pfam" id="PF10555">
    <property type="entry name" value="MraY_sig1"/>
    <property type="match status" value="1"/>
</dbReference>
<dbReference type="PROSITE" id="PS01348">
    <property type="entry name" value="MRAY_2"/>
    <property type="match status" value="1"/>
</dbReference>
<reference key="1">
    <citation type="journal article" date="2003" name="J. Bacteriol.">
        <title>Complete genome sequence of the ammonia-oxidizing bacterium and obligate chemolithoautotroph Nitrosomonas europaea.</title>
        <authorList>
            <person name="Chain P."/>
            <person name="Lamerdin J.E."/>
            <person name="Larimer F.W."/>
            <person name="Regala W."/>
            <person name="Lao V."/>
            <person name="Land M.L."/>
            <person name="Hauser L."/>
            <person name="Hooper A.B."/>
            <person name="Klotz M.G."/>
            <person name="Norton J."/>
            <person name="Sayavedra-Soto L.A."/>
            <person name="Arciero D.M."/>
            <person name="Hommes N.G."/>
            <person name="Whittaker M.M."/>
            <person name="Arp D.J."/>
        </authorList>
    </citation>
    <scope>NUCLEOTIDE SEQUENCE [LARGE SCALE GENOMIC DNA]</scope>
    <source>
        <strain>ATCC 19718 / CIP 103999 / KCTC 2705 / NBRC 14298</strain>
    </source>
</reference>
<comment type="function">
    <text evidence="1">Catalyzes the initial step of the lipid cycle reactions in the biosynthesis of the cell wall peptidoglycan: transfers peptidoglycan precursor phospho-MurNAc-pentapeptide from UDP-MurNAc-pentapeptide onto the lipid carrier undecaprenyl phosphate, yielding undecaprenyl-pyrophosphoryl-MurNAc-pentapeptide, known as lipid I.</text>
</comment>
<comment type="catalytic activity">
    <reaction evidence="1">
        <text>UDP-N-acetyl-alpha-D-muramoyl-L-alanyl-gamma-D-glutamyl-meso-2,6-diaminopimeloyl-D-alanyl-D-alanine + di-trans,octa-cis-undecaprenyl phosphate = di-trans,octa-cis-undecaprenyl diphospho-N-acetyl-alpha-D-muramoyl-L-alanyl-D-glutamyl-meso-2,6-diaminopimeloyl-D-alanyl-D-alanine + UMP</text>
        <dbReference type="Rhea" id="RHEA:28386"/>
        <dbReference type="ChEBI" id="CHEBI:57865"/>
        <dbReference type="ChEBI" id="CHEBI:60392"/>
        <dbReference type="ChEBI" id="CHEBI:61386"/>
        <dbReference type="ChEBI" id="CHEBI:61387"/>
        <dbReference type="EC" id="2.7.8.13"/>
    </reaction>
</comment>
<comment type="cofactor">
    <cofactor evidence="1">
        <name>Mg(2+)</name>
        <dbReference type="ChEBI" id="CHEBI:18420"/>
    </cofactor>
</comment>
<comment type="pathway">
    <text evidence="1">Cell wall biogenesis; peptidoglycan biosynthesis.</text>
</comment>
<comment type="subcellular location">
    <subcellularLocation>
        <location evidence="1">Cell inner membrane</location>
        <topology evidence="1">Multi-pass membrane protein</topology>
    </subcellularLocation>
</comment>
<comment type="similarity">
    <text evidence="1">Belongs to the glycosyltransferase 4 family. MraY subfamily.</text>
</comment>
<organism>
    <name type="scientific">Nitrosomonas europaea (strain ATCC 19718 / CIP 103999 / KCTC 2705 / NBRC 14298)</name>
    <dbReference type="NCBI Taxonomy" id="228410"/>
    <lineage>
        <taxon>Bacteria</taxon>
        <taxon>Pseudomonadati</taxon>
        <taxon>Pseudomonadota</taxon>
        <taxon>Betaproteobacteria</taxon>
        <taxon>Nitrosomonadales</taxon>
        <taxon>Nitrosomonadaceae</taxon>
        <taxon>Nitrosomonas</taxon>
    </lineage>
</organism>
<gene>
    <name evidence="1" type="primary">mraY</name>
    <name type="ordered locus">NE0988</name>
</gene>
<evidence type="ECO:0000255" key="1">
    <source>
        <dbReference type="HAMAP-Rule" id="MF_00038"/>
    </source>
</evidence>
<feature type="chain" id="PRO_0000108859" description="Phospho-N-acetylmuramoyl-pentapeptide-transferase">
    <location>
        <begin position="1"/>
        <end position="361"/>
    </location>
</feature>
<feature type="transmembrane region" description="Helical" evidence="1">
    <location>
        <begin position="28"/>
        <end position="48"/>
    </location>
</feature>
<feature type="transmembrane region" description="Helical" evidence="1">
    <location>
        <begin position="73"/>
        <end position="93"/>
    </location>
</feature>
<feature type="transmembrane region" description="Helical" evidence="1">
    <location>
        <begin position="97"/>
        <end position="117"/>
    </location>
</feature>
<feature type="transmembrane region" description="Helical" evidence="1">
    <location>
        <begin position="134"/>
        <end position="154"/>
    </location>
</feature>
<feature type="transmembrane region" description="Helical" evidence="1">
    <location>
        <begin position="168"/>
        <end position="188"/>
    </location>
</feature>
<feature type="transmembrane region" description="Helical" evidence="1">
    <location>
        <begin position="200"/>
        <end position="220"/>
    </location>
</feature>
<feature type="transmembrane region" description="Helical" evidence="1">
    <location>
        <begin position="237"/>
        <end position="257"/>
    </location>
</feature>
<feature type="transmembrane region" description="Helical" evidence="1">
    <location>
        <begin position="264"/>
        <end position="284"/>
    </location>
</feature>
<feature type="transmembrane region" description="Helical" evidence="1">
    <location>
        <begin position="289"/>
        <end position="309"/>
    </location>
</feature>
<feature type="transmembrane region" description="Helical" evidence="1">
    <location>
        <begin position="338"/>
        <end position="358"/>
    </location>
</feature>
<sequence>MLLALSQWIAEDIRAFNVFSYITLRTMLAALTALSISFLIGPAMIRSLTARKVGQSVRNDGPQSHLIKAGTPTMGGTLILTAVIVTTLLWADLSNRYIWVVSLTTLGFGAIGWVDDYRKVIQRNSKGLSASSKFFWQSIIALLVAVYLAMTADLPQHTEMIVPFFKEVAIPLGTFLFIVLTYLVIVGTSNAVNLTDGLDGLAIMPTVMISGALAIFAYVAGHAVFAKYLGIPHIPNAGELAVFCGALTGAGLAFLWFNTYPAEVFMGDVGALALGAALGVITVIVRQEIVLVIMGGVFVMEALSVMIQVASYKLFGQRVFRMAPLHHHYELKGWKENQVVVRFWIITLILVLIGLSTLKLR</sequence>
<keyword id="KW-0131">Cell cycle</keyword>
<keyword id="KW-0132">Cell division</keyword>
<keyword id="KW-0997">Cell inner membrane</keyword>
<keyword id="KW-1003">Cell membrane</keyword>
<keyword id="KW-0133">Cell shape</keyword>
<keyword id="KW-0961">Cell wall biogenesis/degradation</keyword>
<keyword id="KW-0460">Magnesium</keyword>
<keyword id="KW-0472">Membrane</keyword>
<keyword id="KW-0479">Metal-binding</keyword>
<keyword id="KW-0573">Peptidoglycan synthesis</keyword>
<keyword id="KW-1185">Reference proteome</keyword>
<keyword id="KW-0808">Transferase</keyword>
<keyword id="KW-0812">Transmembrane</keyword>
<keyword id="KW-1133">Transmembrane helix</keyword>